<keyword id="KW-0002">3D-structure</keyword>
<keyword id="KW-0324">Glycolysis</keyword>
<keyword id="KW-0456">Lyase</keyword>
<keyword id="KW-0479">Metal-binding</keyword>
<keyword id="KW-1185">Reference proteome</keyword>
<keyword id="KW-0862">Zinc</keyword>
<comment type="function">
    <text evidence="1">Catalyzes the aldol condensation of dihydroxyacetone phosphate (DHAP or glycerone-phosphate) with glyceraldehyde 3-phosphate (G3P) to form fructose 1,6-bisphosphate (FBP) in gluconeogenesis and the reverse reaction in glycolysis.</text>
</comment>
<comment type="catalytic activity">
    <reaction>
        <text>beta-D-fructose 1,6-bisphosphate = D-glyceraldehyde 3-phosphate + dihydroxyacetone phosphate</text>
        <dbReference type="Rhea" id="RHEA:14729"/>
        <dbReference type="ChEBI" id="CHEBI:32966"/>
        <dbReference type="ChEBI" id="CHEBI:57642"/>
        <dbReference type="ChEBI" id="CHEBI:59776"/>
        <dbReference type="EC" id="4.1.2.13"/>
    </reaction>
</comment>
<comment type="cofactor">
    <cofactor evidence="1">
        <name>Zn(2+)</name>
        <dbReference type="ChEBI" id="CHEBI:29105"/>
    </cofactor>
    <text evidence="1">Binds 2 Zn(2+) ions per subunit. One is catalytic and the other provides a structural contribution.</text>
</comment>
<comment type="pathway">
    <text>Carbohydrate degradation; glycolysis; D-glyceraldehyde 3-phosphate and glycerone phosphate from D-glucose: step 4/4.</text>
</comment>
<comment type="subunit">
    <text evidence="1">Homodimer.</text>
</comment>
<comment type="similarity">
    <text evidence="2">Belongs to the class II fructose-bisphosphate aldolase family.</text>
</comment>
<gene>
    <name type="ORF">CIMG_05755</name>
</gene>
<evidence type="ECO:0000250" key="1"/>
<evidence type="ECO:0000305" key="2"/>
<evidence type="ECO:0007829" key="3">
    <source>
        <dbReference type="PDB" id="3PM6"/>
    </source>
</evidence>
<protein>
    <recommendedName>
        <fullName>Putative fructose-bisphosphate aldolase</fullName>
        <shortName>FBP aldolase</shortName>
        <shortName>FBPA</shortName>
        <ecNumber>4.1.2.13</ecNumber>
    </recommendedName>
    <alternativeName>
        <fullName>Putative fructose-1,6-bisphosphate aldolase</fullName>
    </alternativeName>
</protein>
<reference key="1">
    <citation type="journal article" date="2009" name="Genome Res.">
        <title>Comparative genomic analyses of the human fungal pathogens Coccidioides and their relatives.</title>
        <authorList>
            <person name="Sharpton T.J."/>
            <person name="Stajich J.E."/>
            <person name="Rounsley S.D."/>
            <person name="Gardner M.J."/>
            <person name="Wortman J.R."/>
            <person name="Jordar V.S."/>
            <person name="Maiti R."/>
            <person name="Kodira C.D."/>
            <person name="Neafsey D.E."/>
            <person name="Zeng Q."/>
            <person name="Hung C.-Y."/>
            <person name="McMahan C."/>
            <person name="Muszewska A."/>
            <person name="Grynberg M."/>
            <person name="Mandel M.A."/>
            <person name="Kellner E.M."/>
            <person name="Barker B.M."/>
            <person name="Galgiani J.N."/>
            <person name="Orbach M.J."/>
            <person name="Kirkland T.N."/>
            <person name="Cole G.T."/>
            <person name="Henn M.R."/>
            <person name="Birren B.W."/>
            <person name="Taylor J.W."/>
        </authorList>
    </citation>
    <scope>NUCLEOTIDE SEQUENCE [LARGE SCALE GENOMIC DNA]</scope>
    <source>
        <strain>RS</strain>
    </source>
</reference>
<reference key="2">
    <citation type="journal article" date="2010" name="Genome Res.">
        <title>Population genomic sequencing of Coccidioides fungi reveals recent hybridization and transposon control.</title>
        <authorList>
            <person name="Neafsey D.E."/>
            <person name="Barker B.M."/>
            <person name="Sharpton T.J."/>
            <person name="Stajich J.E."/>
            <person name="Park D.J."/>
            <person name="Whiston E."/>
            <person name="Hung C.-Y."/>
            <person name="McMahan C."/>
            <person name="White J."/>
            <person name="Sykes S."/>
            <person name="Heiman D."/>
            <person name="Young S."/>
            <person name="Zeng Q."/>
            <person name="Abouelleil A."/>
            <person name="Aftuck L."/>
            <person name="Bessette D."/>
            <person name="Brown A."/>
            <person name="FitzGerald M."/>
            <person name="Lui A."/>
            <person name="Macdonald J.P."/>
            <person name="Priest M."/>
            <person name="Orbach M.J."/>
            <person name="Galgiani J.N."/>
            <person name="Kirkland T.N."/>
            <person name="Cole G.T."/>
            <person name="Birren B.W."/>
            <person name="Henn M.R."/>
            <person name="Taylor J.W."/>
            <person name="Rounsley S.D."/>
        </authorList>
    </citation>
    <scope>GENOME REANNOTATION</scope>
    <source>
        <strain>RS</strain>
    </source>
</reference>
<dbReference type="EC" id="4.1.2.13"/>
<dbReference type="EMBL" id="GG704912">
    <property type="protein sequence ID" value="EAS30276.3"/>
    <property type="molecule type" value="Genomic_DNA"/>
</dbReference>
<dbReference type="RefSeq" id="XP_001241859.1">
    <property type="nucleotide sequence ID" value="XM_001241858.2"/>
</dbReference>
<dbReference type="PDB" id="3PM6">
    <property type="method" value="X-ray"/>
    <property type="resolution" value="2.20 A"/>
    <property type="chains" value="A/B=1-302"/>
</dbReference>
<dbReference type="PDBsum" id="3PM6"/>
<dbReference type="SMR" id="P0CJ44"/>
<dbReference type="STRING" id="246410.P0CJ44"/>
<dbReference type="GeneID" id="4561677"/>
<dbReference type="KEGG" id="cim:CIMG_05755"/>
<dbReference type="VEuPathDB" id="FungiDB:CIMG_05755"/>
<dbReference type="InParanoid" id="P0CJ44"/>
<dbReference type="OMA" id="TCYSAIR"/>
<dbReference type="OrthoDB" id="2558351at2759"/>
<dbReference type="UniPathway" id="UPA00109">
    <property type="reaction ID" value="UER00183"/>
</dbReference>
<dbReference type="EvolutionaryTrace" id="P0CJ44"/>
<dbReference type="Proteomes" id="UP000001261">
    <property type="component" value="Unassembled WGS sequence"/>
</dbReference>
<dbReference type="GO" id="GO:0004332">
    <property type="term" value="F:fructose-bisphosphate aldolase activity"/>
    <property type="evidence" value="ECO:0007669"/>
    <property type="project" value="UniProtKB-EC"/>
</dbReference>
<dbReference type="GO" id="GO:0008270">
    <property type="term" value="F:zinc ion binding"/>
    <property type="evidence" value="ECO:0007669"/>
    <property type="project" value="InterPro"/>
</dbReference>
<dbReference type="GO" id="GO:0006096">
    <property type="term" value="P:glycolytic process"/>
    <property type="evidence" value="ECO:0007669"/>
    <property type="project" value="UniProtKB-UniPathway"/>
</dbReference>
<dbReference type="CDD" id="cd00947">
    <property type="entry name" value="TBP_aldolase_IIB"/>
    <property type="match status" value="1"/>
</dbReference>
<dbReference type="Gene3D" id="3.20.20.70">
    <property type="entry name" value="Aldolase class I"/>
    <property type="match status" value="1"/>
</dbReference>
<dbReference type="InterPro" id="IPR013785">
    <property type="entry name" value="Aldolase_TIM"/>
</dbReference>
<dbReference type="InterPro" id="IPR050246">
    <property type="entry name" value="Class_II_FBP_aldolase"/>
</dbReference>
<dbReference type="InterPro" id="IPR000771">
    <property type="entry name" value="FBA_II"/>
</dbReference>
<dbReference type="PANTHER" id="PTHR30304">
    <property type="entry name" value="D-TAGATOSE-1,6-BISPHOSPHATE ALDOLASE"/>
    <property type="match status" value="1"/>
</dbReference>
<dbReference type="PANTHER" id="PTHR30304:SF0">
    <property type="entry name" value="D-TAGATOSE-1,6-BISPHOSPHATE ALDOLASE SUBUNIT GATY-RELATED"/>
    <property type="match status" value="1"/>
</dbReference>
<dbReference type="Pfam" id="PF01116">
    <property type="entry name" value="F_bP_aldolase"/>
    <property type="match status" value="1"/>
</dbReference>
<dbReference type="PIRSF" id="PIRSF001359">
    <property type="entry name" value="F_bP_aldolase_II"/>
    <property type="match status" value="1"/>
</dbReference>
<dbReference type="SUPFAM" id="SSF51569">
    <property type="entry name" value="Aldolase"/>
    <property type="match status" value="1"/>
</dbReference>
<sequence length="302" mass="33389">MPHPSLKSNRALPLLTFARTHSFAIPAICVYNLEGILAIIRAAEHKRSPAMILLFPWAIQYADSLLVRTAASACRAASVPITLHLDHAQDPEIIKRAADLSRSETHEPGFDSIMVDMSHFSKEENLRLTRELVAYCNARGIATEAEPGRIEGGEDGVQDTVDLEGVLTTPEESEEFVATGINWLAPAFGNVHGNYGPRGVQLDYERLQRINEAVGERVGLVLHGADPFTKEIFEKCIERGVAKVNVNRAVNNEYVKVMREKAGSLPITRLHEEVTNAMQAAVEKIMDMIDSTGKAEFMMDEK</sequence>
<proteinExistence type="evidence at protein level"/>
<accession>P0CJ44</accession>
<accession>J3K6Q1</accession>
<accession>J3K765</accession>
<organism>
    <name type="scientific">Coccidioides immitis (strain RS)</name>
    <name type="common">Valley fever fungus</name>
    <dbReference type="NCBI Taxonomy" id="246410"/>
    <lineage>
        <taxon>Eukaryota</taxon>
        <taxon>Fungi</taxon>
        <taxon>Dikarya</taxon>
        <taxon>Ascomycota</taxon>
        <taxon>Pezizomycotina</taxon>
        <taxon>Eurotiomycetes</taxon>
        <taxon>Eurotiomycetidae</taxon>
        <taxon>Onygenales</taxon>
        <taxon>Onygenaceae</taxon>
        <taxon>Coccidioides</taxon>
    </lineage>
</organism>
<name>ALF_COCIM</name>
<feature type="chain" id="PRO_0000403787" description="Putative fructose-bisphosphate aldolase">
    <location>
        <begin position="1"/>
        <end position="302"/>
    </location>
</feature>
<feature type="active site" description="Proton donor" evidence="1">
    <location>
        <position position="86"/>
    </location>
</feature>
<feature type="binding site" evidence="1">
    <location>
        <position position="87"/>
    </location>
    <ligand>
        <name>Zn(2+)</name>
        <dbReference type="ChEBI" id="CHEBI:29105"/>
        <label>1</label>
        <note>catalytic</note>
    </ligand>
</feature>
<feature type="binding site" evidence="1">
    <location>
        <position position="116"/>
    </location>
    <ligand>
        <name>Zn(2+)</name>
        <dbReference type="ChEBI" id="CHEBI:29105"/>
        <label>2</label>
    </ligand>
</feature>
<feature type="binding site" evidence="1">
    <location>
        <position position="146"/>
    </location>
    <ligand>
        <name>Zn(2+)</name>
        <dbReference type="ChEBI" id="CHEBI:29105"/>
        <label>2</label>
    </ligand>
</feature>
<feature type="binding site" evidence="1">
    <location>
        <position position="192"/>
    </location>
    <ligand>
        <name>Zn(2+)</name>
        <dbReference type="ChEBI" id="CHEBI:29105"/>
        <label>1</label>
        <note>catalytic</note>
    </ligand>
</feature>
<feature type="binding site" evidence="1">
    <location>
        <position position="193"/>
    </location>
    <ligand>
        <name>dihydroxyacetone phosphate</name>
        <dbReference type="ChEBI" id="CHEBI:57642"/>
    </ligand>
</feature>
<feature type="binding site" evidence="1">
    <location>
        <position position="223"/>
    </location>
    <ligand>
        <name>Zn(2+)</name>
        <dbReference type="ChEBI" id="CHEBI:29105"/>
        <label>1</label>
        <note>catalytic</note>
    </ligand>
</feature>
<feature type="binding site" evidence="1">
    <location>
        <begin position="224"/>
        <end position="226"/>
    </location>
    <ligand>
        <name>dihydroxyacetone phosphate</name>
        <dbReference type="ChEBI" id="CHEBI:57642"/>
    </ligand>
</feature>
<feature type="binding site" evidence="1">
    <location>
        <begin position="245"/>
        <end position="248"/>
    </location>
    <ligand>
        <name>dihydroxyacetone phosphate</name>
        <dbReference type="ChEBI" id="CHEBI:57642"/>
    </ligand>
</feature>
<feature type="helix" evidence="3">
    <location>
        <begin position="12"/>
        <end position="20"/>
    </location>
</feature>
<feature type="strand" evidence="3">
    <location>
        <begin position="25"/>
        <end position="29"/>
    </location>
</feature>
<feature type="helix" evidence="3">
    <location>
        <begin position="33"/>
        <end position="45"/>
    </location>
</feature>
<feature type="strand" evidence="3">
    <location>
        <begin position="50"/>
        <end position="54"/>
    </location>
</feature>
<feature type="helix" evidence="3">
    <location>
        <begin position="56"/>
        <end position="62"/>
    </location>
</feature>
<feature type="helix" evidence="3">
    <location>
        <begin position="65"/>
        <end position="76"/>
    </location>
</feature>
<feature type="strand" evidence="3">
    <location>
        <begin position="81"/>
        <end position="88"/>
    </location>
</feature>
<feature type="helix" evidence="3">
    <location>
        <begin position="91"/>
        <end position="99"/>
    </location>
</feature>
<feature type="strand" evidence="3">
    <location>
        <begin position="111"/>
        <end position="115"/>
    </location>
</feature>
<feature type="helix" evidence="3">
    <location>
        <begin position="122"/>
        <end position="137"/>
    </location>
</feature>
<feature type="turn" evidence="3">
    <location>
        <begin position="138"/>
        <end position="140"/>
    </location>
</feature>
<feature type="strand" evidence="3">
    <location>
        <begin position="142"/>
        <end position="145"/>
    </location>
</feature>
<feature type="strand" evidence="3">
    <location>
        <begin position="147"/>
        <end position="149"/>
    </location>
</feature>
<feature type="helix" evidence="3">
    <location>
        <begin position="170"/>
        <end position="177"/>
    </location>
</feature>
<feature type="turn" evidence="3">
    <location>
        <begin position="178"/>
        <end position="180"/>
    </location>
</feature>
<feature type="strand" evidence="3">
    <location>
        <begin position="182"/>
        <end position="184"/>
    </location>
</feature>
<feature type="helix" evidence="3">
    <location>
        <begin position="204"/>
        <end position="214"/>
    </location>
</feature>
<feature type="turn" evidence="3">
    <location>
        <begin position="215"/>
        <end position="217"/>
    </location>
</feature>
<feature type="strand" evidence="3">
    <location>
        <begin position="218"/>
        <end position="222"/>
    </location>
</feature>
<feature type="helix" evidence="3">
    <location>
        <begin position="230"/>
        <end position="238"/>
    </location>
</feature>
<feature type="strand" evidence="3">
    <location>
        <begin position="241"/>
        <end position="247"/>
    </location>
</feature>
<feature type="helix" evidence="3">
    <location>
        <begin position="248"/>
        <end position="261"/>
    </location>
</feature>
<feature type="turn" evidence="3">
    <location>
        <begin position="262"/>
        <end position="264"/>
    </location>
</feature>
<feature type="helix" evidence="3">
    <location>
        <begin position="267"/>
        <end position="288"/>
    </location>
</feature>
<feature type="helix" evidence="3">
    <location>
        <begin position="294"/>
        <end position="297"/>
    </location>
</feature>